<dbReference type="EC" id="6.1.1.20" evidence="1"/>
<dbReference type="EMBL" id="CP000053">
    <property type="protein sequence ID" value="AAY61498.1"/>
    <property type="status" value="ALT_INIT"/>
    <property type="molecule type" value="Genomic_DNA"/>
</dbReference>
<dbReference type="SMR" id="Q4ULS5"/>
<dbReference type="STRING" id="315456.RF_0647"/>
<dbReference type="KEGG" id="rfe:RF_0647"/>
<dbReference type="eggNOG" id="COG0016">
    <property type="taxonomic scope" value="Bacteria"/>
</dbReference>
<dbReference type="HOGENOM" id="CLU_025086_0_1_5"/>
<dbReference type="OrthoDB" id="9800719at2"/>
<dbReference type="Proteomes" id="UP000008548">
    <property type="component" value="Chromosome"/>
</dbReference>
<dbReference type="GO" id="GO:0005737">
    <property type="term" value="C:cytoplasm"/>
    <property type="evidence" value="ECO:0007669"/>
    <property type="project" value="UniProtKB-SubCell"/>
</dbReference>
<dbReference type="GO" id="GO:0005524">
    <property type="term" value="F:ATP binding"/>
    <property type="evidence" value="ECO:0007669"/>
    <property type="project" value="UniProtKB-UniRule"/>
</dbReference>
<dbReference type="GO" id="GO:0000287">
    <property type="term" value="F:magnesium ion binding"/>
    <property type="evidence" value="ECO:0007669"/>
    <property type="project" value="UniProtKB-UniRule"/>
</dbReference>
<dbReference type="GO" id="GO:0004826">
    <property type="term" value="F:phenylalanine-tRNA ligase activity"/>
    <property type="evidence" value="ECO:0007669"/>
    <property type="project" value="UniProtKB-UniRule"/>
</dbReference>
<dbReference type="GO" id="GO:0000049">
    <property type="term" value="F:tRNA binding"/>
    <property type="evidence" value="ECO:0007669"/>
    <property type="project" value="InterPro"/>
</dbReference>
<dbReference type="GO" id="GO:0006432">
    <property type="term" value="P:phenylalanyl-tRNA aminoacylation"/>
    <property type="evidence" value="ECO:0007669"/>
    <property type="project" value="UniProtKB-UniRule"/>
</dbReference>
<dbReference type="CDD" id="cd00496">
    <property type="entry name" value="PheRS_alpha_core"/>
    <property type="match status" value="1"/>
</dbReference>
<dbReference type="FunFam" id="3.30.930.10:FF:000003">
    <property type="entry name" value="Phenylalanine--tRNA ligase alpha subunit"/>
    <property type="match status" value="1"/>
</dbReference>
<dbReference type="Gene3D" id="3.30.930.10">
    <property type="entry name" value="Bira Bifunctional Protein, Domain 2"/>
    <property type="match status" value="1"/>
</dbReference>
<dbReference type="HAMAP" id="MF_00281">
    <property type="entry name" value="Phe_tRNA_synth_alpha1"/>
    <property type="match status" value="1"/>
</dbReference>
<dbReference type="InterPro" id="IPR006195">
    <property type="entry name" value="aa-tRNA-synth_II"/>
</dbReference>
<dbReference type="InterPro" id="IPR045864">
    <property type="entry name" value="aa-tRNA-synth_II/BPL/LPL"/>
</dbReference>
<dbReference type="InterPro" id="IPR004529">
    <property type="entry name" value="Phe-tRNA-synth_IIc_asu"/>
</dbReference>
<dbReference type="InterPro" id="IPR004188">
    <property type="entry name" value="Phe-tRNA_ligase_II_N"/>
</dbReference>
<dbReference type="InterPro" id="IPR022911">
    <property type="entry name" value="Phe_tRNA_ligase_alpha1_bac"/>
</dbReference>
<dbReference type="InterPro" id="IPR002319">
    <property type="entry name" value="Phenylalanyl-tRNA_Synthase"/>
</dbReference>
<dbReference type="InterPro" id="IPR010978">
    <property type="entry name" value="tRNA-bd_arm"/>
</dbReference>
<dbReference type="NCBIfam" id="TIGR00468">
    <property type="entry name" value="pheS"/>
    <property type="match status" value="1"/>
</dbReference>
<dbReference type="PANTHER" id="PTHR11538:SF41">
    <property type="entry name" value="PHENYLALANINE--TRNA LIGASE, MITOCHONDRIAL"/>
    <property type="match status" value="1"/>
</dbReference>
<dbReference type="PANTHER" id="PTHR11538">
    <property type="entry name" value="PHENYLALANYL-TRNA SYNTHETASE"/>
    <property type="match status" value="1"/>
</dbReference>
<dbReference type="Pfam" id="PF02912">
    <property type="entry name" value="Phe_tRNA-synt_N"/>
    <property type="match status" value="1"/>
</dbReference>
<dbReference type="Pfam" id="PF01409">
    <property type="entry name" value="tRNA-synt_2d"/>
    <property type="match status" value="1"/>
</dbReference>
<dbReference type="SUPFAM" id="SSF55681">
    <property type="entry name" value="Class II aaRS and biotin synthetases"/>
    <property type="match status" value="1"/>
</dbReference>
<dbReference type="SUPFAM" id="SSF46589">
    <property type="entry name" value="tRNA-binding arm"/>
    <property type="match status" value="1"/>
</dbReference>
<dbReference type="PROSITE" id="PS50862">
    <property type="entry name" value="AA_TRNA_LIGASE_II"/>
    <property type="match status" value="1"/>
</dbReference>
<gene>
    <name evidence="1" type="primary">pheS</name>
    <name type="ordered locus">RF_0647</name>
</gene>
<accession>Q4ULS5</accession>
<reference key="1">
    <citation type="journal article" date="2005" name="PLoS Biol.">
        <title>The genome sequence of Rickettsia felis identifies the first putative conjugative plasmid in an obligate intracellular parasite.</title>
        <authorList>
            <person name="Ogata H."/>
            <person name="Renesto P."/>
            <person name="Audic S."/>
            <person name="Robert C."/>
            <person name="Blanc G."/>
            <person name="Fournier P.-E."/>
            <person name="Parinello H."/>
            <person name="Claverie J.-M."/>
            <person name="Raoult D."/>
        </authorList>
    </citation>
    <scope>NUCLEOTIDE SEQUENCE [LARGE SCALE GENOMIC DNA]</scope>
    <source>
        <strain>ATCC VR-1525 / URRWXCal2</strain>
    </source>
</reference>
<organism>
    <name type="scientific">Rickettsia felis (strain ATCC VR-1525 / URRWXCal2)</name>
    <name type="common">Rickettsia azadi</name>
    <dbReference type="NCBI Taxonomy" id="315456"/>
    <lineage>
        <taxon>Bacteria</taxon>
        <taxon>Pseudomonadati</taxon>
        <taxon>Pseudomonadota</taxon>
        <taxon>Alphaproteobacteria</taxon>
        <taxon>Rickettsiales</taxon>
        <taxon>Rickettsiaceae</taxon>
        <taxon>Rickettsieae</taxon>
        <taxon>Rickettsia</taxon>
        <taxon>spotted fever group</taxon>
    </lineage>
</organism>
<protein>
    <recommendedName>
        <fullName evidence="1">Phenylalanine--tRNA ligase alpha subunit</fullName>
        <ecNumber evidence="1">6.1.1.20</ecNumber>
    </recommendedName>
    <alternativeName>
        <fullName evidence="1">Phenylalanyl-tRNA synthetase alpha subunit</fullName>
        <shortName evidence="1">PheRS</shortName>
    </alternativeName>
</protein>
<proteinExistence type="inferred from homology"/>
<keyword id="KW-0030">Aminoacyl-tRNA synthetase</keyword>
<keyword id="KW-0067">ATP-binding</keyword>
<keyword id="KW-0963">Cytoplasm</keyword>
<keyword id="KW-0436">Ligase</keyword>
<keyword id="KW-0460">Magnesium</keyword>
<keyword id="KW-0479">Metal-binding</keyword>
<keyword id="KW-0547">Nucleotide-binding</keyword>
<keyword id="KW-0648">Protein biosynthesis</keyword>
<comment type="catalytic activity">
    <reaction evidence="1">
        <text>tRNA(Phe) + L-phenylalanine + ATP = L-phenylalanyl-tRNA(Phe) + AMP + diphosphate + H(+)</text>
        <dbReference type="Rhea" id="RHEA:19413"/>
        <dbReference type="Rhea" id="RHEA-COMP:9668"/>
        <dbReference type="Rhea" id="RHEA-COMP:9699"/>
        <dbReference type="ChEBI" id="CHEBI:15378"/>
        <dbReference type="ChEBI" id="CHEBI:30616"/>
        <dbReference type="ChEBI" id="CHEBI:33019"/>
        <dbReference type="ChEBI" id="CHEBI:58095"/>
        <dbReference type="ChEBI" id="CHEBI:78442"/>
        <dbReference type="ChEBI" id="CHEBI:78531"/>
        <dbReference type="ChEBI" id="CHEBI:456215"/>
        <dbReference type="EC" id="6.1.1.20"/>
    </reaction>
</comment>
<comment type="cofactor">
    <cofactor evidence="1">
        <name>Mg(2+)</name>
        <dbReference type="ChEBI" id="CHEBI:18420"/>
    </cofactor>
    <text evidence="1">Binds 2 magnesium ions per tetramer.</text>
</comment>
<comment type="subunit">
    <text evidence="1">Tetramer of two alpha and two beta subunits.</text>
</comment>
<comment type="subcellular location">
    <subcellularLocation>
        <location evidence="1">Cytoplasm</location>
    </subcellularLocation>
</comment>
<comment type="similarity">
    <text evidence="1">Belongs to the class-II aminoacyl-tRNA synthetase family. Phe-tRNA synthetase alpha subunit type 1 subfamily.</text>
</comment>
<comment type="sequence caution" evidence="2">
    <conflict type="erroneous initiation">
        <sequence resource="EMBL-CDS" id="AAY61498"/>
    </conflict>
</comment>
<sequence length="349" mass="40484">MENIETILRLAEEKILLVQNLKELQEYKVEFLGKNGIVTGELKKLGSLNEQERKEFGLKINKLKDKIQNIIKAKEEILEEQELNLKLAADKIDLTIPARRYKQGSIHPITQCSEELIQVFSQFGFTIENGPNIENDFHNFTSLNFEDDHPARQMHDTFYLKGQENNKPLLLRTHTSTVQIRAMKNGKPPFRFIAPGRTYRSDSDMTHTPMFHQIEGLVIDKNINMGHLKYVITEFIKSFFENSNIELRFRPSFFPFTEPSAEVDIRMNKNDKWLEVLGCGMVHPNVLKNVGIDSSEYQGFAFGLGVERFAMLKYNIKDLRQFFEGDMRWLKHYNFGSFDIPNLAGGLTK</sequence>
<name>SYFA_RICFE</name>
<evidence type="ECO:0000255" key="1">
    <source>
        <dbReference type="HAMAP-Rule" id="MF_00281"/>
    </source>
</evidence>
<evidence type="ECO:0000305" key="2"/>
<feature type="chain" id="PRO_0000232021" description="Phenylalanine--tRNA ligase alpha subunit">
    <location>
        <begin position="1"/>
        <end position="349"/>
    </location>
</feature>
<feature type="binding site" evidence="1">
    <location>
        <position position="258"/>
    </location>
    <ligand>
        <name>Mg(2+)</name>
        <dbReference type="ChEBI" id="CHEBI:18420"/>
        <note>shared with beta subunit</note>
    </ligand>
</feature>